<reference key="1">
    <citation type="submission" date="2007-04" db="EMBL/GenBank/DDBJ databases">
        <title>Complete sequence of Pseudomonas mendocina ymp.</title>
        <authorList>
            <consortium name="US DOE Joint Genome Institute"/>
            <person name="Copeland A."/>
            <person name="Lucas S."/>
            <person name="Lapidus A."/>
            <person name="Barry K."/>
            <person name="Glavina del Rio T."/>
            <person name="Dalin E."/>
            <person name="Tice H."/>
            <person name="Pitluck S."/>
            <person name="Kiss H."/>
            <person name="Brettin T."/>
            <person name="Detter J.C."/>
            <person name="Bruce D."/>
            <person name="Han C."/>
            <person name="Schmutz J."/>
            <person name="Larimer F."/>
            <person name="Land M."/>
            <person name="Hauser L."/>
            <person name="Kyrpides N."/>
            <person name="Mikhailova N."/>
            <person name="Hersman L."/>
            <person name="Dubois J."/>
            <person name="Maurice P."/>
            <person name="Richardson P."/>
        </authorList>
    </citation>
    <scope>NUCLEOTIDE SEQUENCE [LARGE SCALE GENOMIC DNA]</scope>
    <source>
        <strain>ymp</strain>
    </source>
</reference>
<dbReference type="EC" id="1.14.14.5" evidence="1"/>
<dbReference type="EMBL" id="CP000680">
    <property type="protein sequence ID" value="ABP87069.1"/>
    <property type="molecule type" value="Genomic_DNA"/>
</dbReference>
<dbReference type="SMR" id="A4Y0F3"/>
<dbReference type="STRING" id="399739.Pmen_4322"/>
<dbReference type="KEGG" id="pmy:Pmen_4322"/>
<dbReference type="PATRIC" id="fig|399739.8.peg.4374"/>
<dbReference type="eggNOG" id="COG2141">
    <property type="taxonomic scope" value="Bacteria"/>
</dbReference>
<dbReference type="HOGENOM" id="CLU_027853_1_0_6"/>
<dbReference type="OrthoDB" id="9814695at2"/>
<dbReference type="GO" id="GO:0008726">
    <property type="term" value="F:alkanesulfonate monooxygenase activity"/>
    <property type="evidence" value="ECO:0007669"/>
    <property type="project" value="UniProtKB-UniRule"/>
</dbReference>
<dbReference type="GO" id="GO:0046306">
    <property type="term" value="P:alkanesulfonate catabolic process"/>
    <property type="evidence" value="ECO:0007669"/>
    <property type="project" value="TreeGrafter"/>
</dbReference>
<dbReference type="CDD" id="cd01094">
    <property type="entry name" value="Alkanesulfonate_monoxygenase"/>
    <property type="match status" value="1"/>
</dbReference>
<dbReference type="FunFam" id="3.20.20.30:FF:000001">
    <property type="entry name" value="Alkanesulfonate monooxygenase"/>
    <property type="match status" value="1"/>
</dbReference>
<dbReference type="Gene3D" id="3.20.20.30">
    <property type="entry name" value="Luciferase-like domain"/>
    <property type="match status" value="1"/>
</dbReference>
<dbReference type="HAMAP" id="MF_01229">
    <property type="entry name" value="Alkanesulf_monooxygen"/>
    <property type="match status" value="1"/>
</dbReference>
<dbReference type="InterPro" id="IPR019911">
    <property type="entry name" value="Alkanesulphonate_mOase_FMN-dep"/>
</dbReference>
<dbReference type="InterPro" id="IPR011251">
    <property type="entry name" value="Luciferase-like_dom"/>
</dbReference>
<dbReference type="InterPro" id="IPR036661">
    <property type="entry name" value="Luciferase-like_sf"/>
</dbReference>
<dbReference type="InterPro" id="IPR050172">
    <property type="entry name" value="SsuD_RutA_monooxygenase"/>
</dbReference>
<dbReference type="NCBIfam" id="TIGR03565">
    <property type="entry name" value="alk_sulf_monoox"/>
    <property type="match status" value="1"/>
</dbReference>
<dbReference type="NCBIfam" id="NF001939">
    <property type="entry name" value="PRK00719.1"/>
    <property type="match status" value="1"/>
</dbReference>
<dbReference type="PANTHER" id="PTHR42847">
    <property type="entry name" value="ALKANESULFONATE MONOOXYGENASE"/>
    <property type="match status" value="1"/>
</dbReference>
<dbReference type="PANTHER" id="PTHR42847:SF4">
    <property type="entry name" value="ALKANESULFONATE MONOOXYGENASE-RELATED"/>
    <property type="match status" value="1"/>
</dbReference>
<dbReference type="Pfam" id="PF00296">
    <property type="entry name" value="Bac_luciferase"/>
    <property type="match status" value="1"/>
</dbReference>
<dbReference type="SUPFAM" id="SSF51679">
    <property type="entry name" value="Bacterial luciferase-like"/>
    <property type="match status" value="1"/>
</dbReference>
<comment type="function">
    <text evidence="1">Catalyzes the desulfonation of aliphatic sulfonates.</text>
</comment>
<comment type="catalytic activity">
    <reaction evidence="1">
        <text>an alkanesulfonate + FMNH2 + O2 = an aldehyde + FMN + sulfite + H2O + 2 H(+)</text>
        <dbReference type="Rhea" id="RHEA:23064"/>
        <dbReference type="ChEBI" id="CHEBI:15377"/>
        <dbReference type="ChEBI" id="CHEBI:15378"/>
        <dbReference type="ChEBI" id="CHEBI:15379"/>
        <dbReference type="ChEBI" id="CHEBI:17359"/>
        <dbReference type="ChEBI" id="CHEBI:17478"/>
        <dbReference type="ChEBI" id="CHEBI:57618"/>
        <dbReference type="ChEBI" id="CHEBI:58210"/>
        <dbReference type="ChEBI" id="CHEBI:134249"/>
        <dbReference type="EC" id="1.14.14.5"/>
    </reaction>
</comment>
<comment type="similarity">
    <text evidence="1">Belongs to the SsuD family.</text>
</comment>
<name>SSUD_ECTM1</name>
<sequence length="382" mass="41308">MSLNIFWFLPTHGDGKYLGTAEGARAVDHGYLAQIAQAADRLGYGGVLIPTGRSCEDSWLVAASLIPVTQNLKFLVALRPGIISPTVAARQAATLDRLSNARALFNLVTGGDPDELAGDGLHLSHAERYEASVEFTRIWRRVLEGETVDYDGKHIQVKGAKLLYPPIQQPRPPLYFGGSSDAAQDLAAEQVELYLTWGEPPAAVAEKIAQVREKAARQGREVRFGIRLHVIVRETNEEAWAAADRLISHLDQDTIDRAQASLARFDSVGQQRMAALHGGKTDNLEVSPNLWAGVGLVRGGAGTALVGDGPTVAARVREYAELGIDTFIFSGYPHLEESYRVAELLFPHLDVAPPARPESRGYVSPFGEMISSDILPKAAAAS</sequence>
<proteinExistence type="inferred from homology"/>
<accession>A4Y0F3</accession>
<gene>
    <name evidence="1" type="primary">ssuD</name>
    <name type="ordered locus">Pmen_4322</name>
</gene>
<protein>
    <recommendedName>
        <fullName evidence="1">Alkanesulfonate monooxygenase</fullName>
        <ecNumber evidence="1">1.14.14.5</ecNumber>
    </recommendedName>
    <alternativeName>
        <fullName evidence="1">FMNH2-dependent aliphatic sulfonate monooxygenase</fullName>
    </alternativeName>
</protein>
<organism>
    <name type="scientific">Ectopseudomonas mendocina (strain ymp)</name>
    <name type="common">Pseudomonas mendocina</name>
    <dbReference type="NCBI Taxonomy" id="399739"/>
    <lineage>
        <taxon>Bacteria</taxon>
        <taxon>Pseudomonadati</taxon>
        <taxon>Pseudomonadota</taxon>
        <taxon>Gammaproteobacteria</taxon>
        <taxon>Pseudomonadales</taxon>
        <taxon>Pseudomonadaceae</taxon>
        <taxon>Ectopseudomonas</taxon>
    </lineage>
</organism>
<evidence type="ECO:0000255" key="1">
    <source>
        <dbReference type="HAMAP-Rule" id="MF_01229"/>
    </source>
</evidence>
<feature type="chain" id="PRO_1000066829" description="Alkanesulfonate monooxygenase">
    <location>
        <begin position="1"/>
        <end position="382"/>
    </location>
</feature>
<keyword id="KW-0285">Flavoprotein</keyword>
<keyword id="KW-0288">FMN</keyword>
<keyword id="KW-0503">Monooxygenase</keyword>
<keyword id="KW-0560">Oxidoreductase</keyword>